<comment type="function">
    <text evidence="1">Catalyzes the oxidation of L-aspartate to iminoaspartate, the first step in the de novo biosynthesis of NAD(+).</text>
</comment>
<comment type="catalytic activity">
    <reaction evidence="1">
        <text>L-aspartate + O2 = iminosuccinate + H2O2</text>
        <dbReference type="Rhea" id="RHEA:25876"/>
        <dbReference type="ChEBI" id="CHEBI:15379"/>
        <dbReference type="ChEBI" id="CHEBI:16240"/>
        <dbReference type="ChEBI" id="CHEBI:29991"/>
        <dbReference type="ChEBI" id="CHEBI:77875"/>
        <dbReference type="EC" id="1.4.3.16"/>
    </reaction>
    <physiologicalReaction direction="left-to-right" evidence="1">
        <dbReference type="Rhea" id="RHEA:25877"/>
    </physiologicalReaction>
</comment>
<comment type="cofactor">
    <cofactor evidence="1">
        <name>FAD</name>
        <dbReference type="ChEBI" id="CHEBI:57692"/>
    </cofactor>
    <text evidence="1">Binds 1 FAD per subunit.</text>
</comment>
<comment type="pathway">
    <text evidence="1">Cofactor biosynthesis; NAD(+) biosynthesis; iminoaspartate from L-aspartate (oxidase route): step 1/1.</text>
</comment>
<comment type="subcellular location">
    <subcellularLocation>
        <location evidence="1">Cytoplasm</location>
    </subcellularLocation>
</comment>
<comment type="similarity">
    <text evidence="2">Belongs to the FAD-dependent oxidoreductase 2 family. NadB subfamily.</text>
</comment>
<keyword id="KW-0963">Cytoplasm</keyword>
<keyword id="KW-0274">FAD</keyword>
<keyword id="KW-0285">Flavoprotein</keyword>
<keyword id="KW-0547">Nucleotide-binding</keyword>
<keyword id="KW-0560">Oxidoreductase</keyword>
<keyword id="KW-0662">Pyridine nucleotide biosynthesis</keyword>
<reference key="1">
    <citation type="journal article" date="2000" name="Nature">
        <title>The genome sequence of the plant pathogen Xylella fastidiosa.</title>
        <authorList>
            <person name="Simpson A.J.G."/>
            <person name="Reinach F.C."/>
            <person name="Arruda P."/>
            <person name="Abreu F.A."/>
            <person name="Acencio M."/>
            <person name="Alvarenga R."/>
            <person name="Alves L.M.C."/>
            <person name="Araya J.E."/>
            <person name="Baia G.S."/>
            <person name="Baptista C.S."/>
            <person name="Barros M.H."/>
            <person name="Bonaccorsi E.D."/>
            <person name="Bordin S."/>
            <person name="Bove J.M."/>
            <person name="Briones M.R.S."/>
            <person name="Bueno M.R.P."/>
            <person name="Camargo A.A."/>
            <person name="Camargo L.E.A."/>
            <person name="Carraro D.M."/>
            <person name="Carrer H."/>
            <person name="Colauto N.B."/>
            <person name="Colombo C."/>
            <person name="Costa F.F."/>
            <person name="Costa M.C.R."/>
            <person name="Costa-Neto C.M."/>
            <person name="Coutinho L.L."/>
            <person name="Cristofani M."/>
            <person name="Dias-Neto E."/>
            <person name="Docena C."/>
            <person name="El-Dorry H."/>
            <person name="Facincani A.P."/>
            <person name="Ferreira A.J.S."/>
            <person name="Ferreira V.C.A."/>
            <person name="Ferro J.A."/>
            <person name="Fraga J.S."/>
            <person name="Franca S.C."/>
            <person name="Franco M.C."/>
            <person name="Frohme M."/>
            <person name="Furlan L.R."/>
            <person name="Garnier M."/>
            <person name="Goldman G.H."/>
            <person name="Goldman M.H.S."/>
            <person name="Gomes S.L."/>
            <person name="Gruber A."/>
            <person name="Ho P.L."/>
            <person name="Hoheisel J.D."/>
            <person name="Junqueira M.L."/>
            <person name="Kemper E.L."/>
            <person name="Kitajima J.P."/>
            <person name="Krieger J.E."/>
            <person name="Kuramae E.E."/>
            <person name="Laigret F."/>
            <person name="Lambais M.R."/>
            <person name="Leite L.C.C."/>
            <person name="Lemos E.G.M."/>
            <person name="Lemos M.V.F."/>
            <person name="Lopes S.A."/>
            <person name="Lopes C.R."/>
            <person name="Machado J.A."/>
            <person name="Machado M.A."/>
            <person name="Madeira A.M.B.N."/>
            <person name="Madeira H.M.F."/>
            <person name="Marino C.L."/>
            <person name="Marques M.V."/>
            <person name="Martins E.A.L."/>
            <person name="Martins E.M.F."/>
            <person name="Matsukuma A.Y."/>
            <person name="Menck C.F.M."/>
            <person name="Miracca E.C."/>
            <person name="Miyaki C.Y."/>
            <person name="Monteiro-Vitorello C.B."/>
            <person name="Moon D.H."/>
            <person name="Nagai M.A."/>
            <person name="Nascimento A.L.T.O."/>
            <person name="Netto L.E.S."/>
            <person name="Nhani A. Jr."/>
            <person name="Nobrega F.G."/>
            <person name="Nunes L.R."/>
            <person name="Oliveira M.A."/>
            <person name="de Oliveira M.C."/>
            <person name="de Oliveira R.C."/>
            <person name="Palmieri D.A."/>
            <person name="Paris A."/>
            <person name="Peixoto B.R."/>
            <person name="Pereira G.A.G."/>
            <person name="Pereira H.A. Jr."/>
            <person name="Pesquero J.B."/>
            <person name="Quaggio R.B."/>
            <person name="Roberto P.G."/>
            <person name="Rodrigues V."/>
            <person name="de Rosa A.J.M."/>
            <person name="de Rosa V.E. Jr."/>
            <person name="de Sa R.G."/>
            <person name="Santelli R.V."/>
            <person name="Sawasaki H.E."/>
            <person name="da Silva A.C.R."/>
            <person name="da Silva A.M."/>
            <person name="da Silva F.R."/>
            <person name="Silva W.A. Jr."/>
            <person name="da Silveira J.F."/>
            <person name="Silvestri M.L.Z."/>
            <person name="Siqueira W.J."/>
            <person name="de Souza A.A."/>
            <person name="de Souza A.P."/>
            <person name="Terenzi M.F."/>
            <person name="Truffi D."/>
            <person name="Tsai S.M."/>
            <person name="Tsuhako M.H."/>
            <person name="Vallada H."/>
            <person name="Van Sluys M.A."/>
            <person name="Verjovski-Almeida S."/>
            <person name="Vettore A.L."/>
            <person name="Zago M.A."/>
            <person name="Zatz M."/>
            <person name="Meidanis J."/>
            <person name="Setubal J.C."/>
        </authorList>
    </citation>
    <scope>NUCLEOTIDE SEQUENCE [LARGE SCALE GENOMIC DNA]</scope>
    <source>
        <strain>9a5c</strain>
    </source>
</reference>
<proteinExistence type="inferred from homology"/>
<sequence>MAEIVDCFADRPIIVGSGLAGLIAALTMSPEPSVLVTRSALGAETSSAWAQGGMSVSLSPDDNPSLHLADTLAAGDGLCDAVAAESIILEALDAFHVLQHFGIHFDQDSNGHLALGLEAAHSRRRIVHVGGDRSGTAIVQALTACVLNDPSITVLEGLEARHILMADNVVCGLLLANPTSEIVLPSSRILLATGGIGGLYDATTNPVSNFGQGIAMAARAGAVLADMEFVQFHPTALHCHNRPLALVSEAVRGEGAVLINERGERFMADIPGAELAARNIVAQAISAEITRGGQVFLDARQALGARFSTRFPTITALCHKVGIDPVHMPIPVCPAAHYHMGGIAIDHQGRSSIPGLWVAGEAASTGLHGANRLASNSLLEAVVMGTRAARDITFHNTPHPLGTIPITPKKPDTTLIRPIVSQCLGVLRHAADMHRAIAALLPFVEGEEESSDPAIVALLIAIFAYLRTESRGAHARTDFPLKHDTTQRRHMTLEDVLEIAHSCVAQRKEKIS</sequence>
<evidence type="ECO:0000250" key="1">
    <source>
        <dbReference type="UniProtKB" id="P10902"/>
    </source>
</evidence>
<evidence type="ECO:0000305" key="2"/>
<name>NADB_XYLFA</name>
<protein>
    <recommendedName>
        <fullName evidence="1">L-aspartate oxidase</fullName>
        <shortName evidence="1">LASPO</shortName>
        <ecNumber evidence="1">1.4.3.16</ecNumber>
    </recommendedName>
    <alternativeName>
        <fullName>Quinolinate synthase B</fullName>
    </alternativeName>
</protein>
<organism>
    <name type="scientific">Xylella fastidiosa (strain 9a5c)</name>
    <dbReference type="NCBI Taxonomy" id="160492"/>
    <lineage>
        <taxon>Bacteria</taxon>
        <taxon>Pseudomonadati</taxon>
        <taxon>Pseudomonadota</taxon>
        <taxon>Gammaproteobacteria</taxon>
        <taxon>Lysobacterales</taxon>
        <taxon>Lysobacteraceae</taxon>
        <taxon>Xylella</taxon>
    </lineage>
</organism>
<accession>Q9PC57</accession>
<dbReference type="EC" id="1.4.3.16" evidence="1"/>
<dbReference type="EMBL" id="AE003849">
    <property type="protein sequence ID" value="AAF84730.1"/>
    <property type="molecule type" value="Genomic_DNA"/>
</dbReference>
<dbReference type="PIR" id="A82621">
    <property type="entry name" value="A82621"/>
</dbReference>
<dbReference type="RefSeq" id="WP_010894390.1">
    <property type="nucleotide sequence ID" value="NC_002488.3"/>
</dbReference>
<dbReference type="SMR" id="Q9PC57"/>
<dbReference type="STRING" id="160492.XF_1924"/>
<dbReference type="KEGG" id="xfa:XF_1924"/>
<dbReference type="eggNOG" id="COG0029">
    <property type="taxonomic scope" value="Bacteria"/>
</dbReference>
<dbReference type="HOGENOM" id="CLU_014312_3_2_6"/>
<dbReference type="UniPathway" id="UPA00253">
    <property type="reaction ID" value="UER00326"/>
</dbReference>
<dbReference type="Proteomes" id="UP000000812">
    <property type="component" value="Chromosome"/>
</dbReference>
<dbReference type="GO" id="GO:0005737">
    <property type="term" value="C:cytoplasm"/>
    <property type="evidence" value="ECO:0007669"/>
    <property type="project" value="UniProtKB-SubCell"/>
</dbReference>
<dbReference type="GO" id="GO:0008734">
    <property type="term" value="F:L-aspartate oxidase activity"/>
    <property type="evidence" value="ECO:0007669"/>
    <property type="project" value="UniProtKB-EC"/>
</dbReference>
<dbReference type="GO" id="GO:0000166">
    <property type="term" value="F:nucleotide binding"/>
    <property type="evidence" value="ECO:0007669"/>
    <property type="project" value="UniProtKB-KW"/>
</dbReference>
<dbReference type="GO" id="GO:0034628">
    <property type="term" value="P:'de novo' NAD biosynthetic process from L-aspartate"/>
    <property type="evidence" value="ECO:0007669"/>
    <property type="project" value="TreeGrafter"/>
</dbReference>
<dbReference type="FunFam" id="3.90.700.10:FF:000002">
    <property type="entry name" value="L-aspartate oxidase"/>
    <property type="match status" value="1"/>
</dbReference>
<dbReference type="Gene3D" id="3.50.50.60">
    <property type="entry name" value="FAD/NAD(P)-binding domain"/>
    <property type="match status" value="1"/>
</dbReference>
<dbReference type="Gene3D" id="1.20.58.100">
    <property type="entry name" value="Fumarate reductase/succinate dehydrogenase flavoprotein-like, C-terminal domain"/>
    <property type="match status" value="1"/>
</dbReference>
<dbReference type="Gene3D" id="3.90.700.10">
    <property type="entry name" value="Succinate dehydrogenase/fumarate reductase flavoprotein, catalytic domain"/>
    <property type="match status" value="1"/>
</dbReference>
<dbReference type="InterPro" id="IPR003953">
    <property type="entry name" value="FAD-dep_OxRdtase_2_FAD-bd"/>
</dbReference>
<dbReference type="InterPro" id="IPR036188">
    <property type="entry name" value="FAD/NAD-bd_sf"/>
</dbReference>
<dbReference type="InterPro" id="IPR037099">
    <property type="entry name" value="Fum_R/Succ_DH_flav-like_C_sf"/>
</dbReference>
<dbReference type="InterPro" id="IPR015939">
    <property type="entry name" value="Fum_Rdtase/Succ_DH_flav-like_C"/>
</dbReference>
<dbReference type="InterPro" id="IPR005288">
    <property type="entry name" value="NadB"/>
</dbReference>
<dbReference type="InterPro" id="IPR027477">
    <property type="entry name" value="Succ_DH/fumarate_Rdtase_cat_sf"/>
</dbReference>
<dbReference type="NCBIfam" id="TIGR00551">
    <property type="entry name" value="nadB"/>
    <property type="match status" value="1"/>
</dbReference>
<dbReference type="NCBIfam" id="NF005701">
    <property type="entry name" value="PRK07512.1"/>
    <property type="match status" value="1"/>
</dbReference>
<dbReference type="PANTHER" id="PTHR42716">
    <property type="entry name" value="L-ASPARTATE OXIDASE"/>
    <property type="match status" value="1"/>
</dbReference>
<dbReference type="PANTHER" id="PTHR42716:SF2">
    <property type="entry name" value="L-ASPARTATE OXIDASE, CHLOROPLASTIC"/>
    <property type="match status" value="1"/>
</dbReference>
<dbReference type="Pfam" id="PF00890">
    <property type="entry name" value="FAD_binding_2"/>
    <property type="match status" value="1"/>
</dbReference>
<dbReference type="Pfam" id="PF02910">
    <property type="entry name" value="Succ_DH_flav_C"/>
    <property type="match status" value="1"/>
</dbReference>
<dbReference type="PRINTS" id="PR00368">
    <property type="entry name" value="FADPNR"/>
</dbReference>
<dbReference type="SUPFAM" id="SSF51905">
    <property type="entry name" value="FAD/NAD(P)-binding domain"/>
    <property type="match status" value="1"/>
</dbReference>
<dbReference type="SUPFAM" id="SSF46977">
    <property type="entry name" value="Succinate dehydrogenase/fumarate reductase flavoprotein C-terminal domain"/>
    <property type="match status" value="1"/>
</dbReference>
<dbReference type="SUPFAM" id="SSF56425">
    <property type="entry name" value="Succinate dehydrogenase/fumarate reductase flavoprotein, catalytic domain"/>
    <property type="match status" value="1"/>
</dbReference>
<gene>
    <name type="primary">nadB</name>
    <name type="ordered locus">XF_1924</name>
</gene>
<feature type="chain" id="PRO_0000184404" description="L-aspartate oxidase">
    <location>
        <begin position="1"/>
        <end position="512"/>
    </location>
</feature>
<feature type="active site" description="Proton donor/acceptor" evidence="1">
    <location>
        <position position="278"/>
    </location>
</feature>
<feature type="binding site" evidence="1">
    <location>
        <begin position="17"/>
        <end position="20"/>
    </location>
    <ligand>
        <name>FAD</name>
        <dbReference type="ChEBI" id="CHEBI:57692"/>
    </ligand>
</feature>
<feature type="binding site" evidence="1">
    <location>
        <begin position="46"/>
        <end position="53"/>
    </location>
    <ligand>
        <name>FAD</name>
        <dbReference type="ChEBI" id="CHEBI:57692"/>
    </ligand>
</feature>
<feature type="binding site" evidence="1">
    <location>
        <position position="361"/>
    </location>
    <ligand>
        <name>FAD</name>
        <dbReference type="ChEBI" id="CHEBI:57692"/>
    </ligand>
</feature>
<feature type="binding site" evidence="1">
    <location>
        <begin position="377"/>
        <end position="378"/>
    </location>
    <ligand>
        <name>FAD</name>
        <dbReference type="ChEBI" id="CHEBI:57692"/>
    </ligand>
</feature>
<feature type="site" description="Important in orienting the L-aspartate substrate" evidence="1">
    <location>
        <position position="118"/>
    </location>
</feature>